<sequence length="89" mass="9674">MGFKNNLSLVSVMVFALILLPMISGQTMQCYSGIACTDDGTCNDYCNPRNNNLGGVCLRRANCCCCYVSVVKSQESSLSKDTNNVFITN</sequence>
<protein>
    <recommendedName>
        <fullName>Putative defensin-like protein 89</fullName>
    </recommendedName>
</protein>
<name>DEF89_ARATH</name>
<feature type="signal peptide" evidence="2">
    <location>
        <begin position="1"/>
        <end position="25"/>
    </location>
</feature>
<feature type="chain" id="PRO_0000379657" description="Putative defensin-like protein 89">
    <location>
        <begin position="26"/>
        <end position="89"/>
    </location>
</feature>
<feature type="disulfide bond" evidence="1">
    <location>
        <begin position="30"/>
        <end position="66"/>
    </location>
</feature>
<feature type="disulfide bond" evidence="1">
    <location>
        <begin position="36"/>
        <end position="57"/>
    </location>
</feature>
<feature type="disulfide bond" evidence="1">
    <location>
        <begin position="42"/>
        <end position="64"/>
    </location>
</feature>
<feature type="disulfide bond" evidence="1">
    <location>
        <begin position="46"/>
        <end position="65"/>
    </location>
</feature>
<reference key="1">
    <citation type="journal article" date="1998" name="Nature">
        <title>Analysis of 1.9 Mb of contiguous sequence from chromosome 4 of Arabidopsis thaliana.</title>
        <authorList>
            <person name="Bevan M."/>
            <person name="Bancroft I."/>
            <person name="Bent E."/>
            <person name="Love K."/>
            <person name="Goodman H.M."/>
            <person name="Dean C."/>
            <person name="Bergkamp R."/>
            <person name="Dirkse W."/>
            <person name="van Staveren M."/>
            <person name="Stiekema W."/>
            <person name="Drost L."/>
            <person name="Ridley P."/>
            <person name="Hudson S.-A."/>
            <person name="Patel K."/>
            <person name="Murphy G."/>
            <person name="Piffanelli P."/>
            <person name="Wedler H."/>
            <person name="Wedler E."/>
            <person name="Wambutt R."/>
            <person name="Weitzenegger T."/>
            <person name="Pohl T."/>
            <person name="Terryn N."/>
            <person name="Gielen J."/>
            <person name="Villarroel R."/>
            <person name="De Clercq R."/>
            <person name="van Montagu M."/>
            <person name="Lecharny A."/>
            <person name="Aubourg S."/>
            <person name="Gy I."/>
            <person name="Kreis M."/>
            <person name="Lao N."/>
            <person name="Kavanagh T."/>
            <person name="Hempel S."/>
            <person name="Kotter P."/>
            <person name="Entian K.-D."/>
            <person name="Rieger M."/>
            <person name="Schaefer M."/>
            <person name="Funk B."/>
            <person name="Mueller-Auer S."/>
            <person name="Silvey M."/>
            <person name="James R."/>
            <person name="Monfort A."/>
            <person name="Pons A."/>
            <person name="Puigdomenech P."/>
            <person name="Douka A."/>
            <person name="Voukelatou E."/>
            <person name="Milioni D."/>
            <person name="Hatzopoulos P."/>
            <person name="Piravandi E."/>
            <person name="Obermaier B."/>
            <person name="Hilbert H."/>
            <person name="Duesterhoeft A."/>
            <person name="Moores T."/>
            <person name="Jones J.D.G."/>
            <person name="Eneva T."/>
            <person name="Palme K."/>
            <person name="Benes V."/>
            <person name="Rechmann S."/>
            <person name="Ansorge W."/>
            <person name="Cooke R."/>
            <person name="Berger C."/>
            <person name="Delseny M."/>
            <person name="Voet M."/>
            <person name="Volckaert G."/>
            <person name="Mewes H.-W."/>
            <person name="Klosterman S."/>
            <person name="Schueller C."/>
            <person name="Chalwatzis N."/>
        </authorList>
    </citation>
    <scope>NUCLEOTIDE SEQUENCE [LARGE SCALE GENOMIC DNA]</scope>
    <source>
        <strain>cv. Columbia</strain>
    </source>
</reference>
<reference key="2">
    <citation type="journal article" date="1999" name="Nature">
        <title>Sequence and analysis of chromosome 4 of the plant Arabidopsis thaliana.</title>
        <authorList>
            <person name="Mayer K.F.X."/>
            <person name="Schueller C."/>
            <person name="Wambutt R."/>
            <person name="Murphy G."/>
            <person name="Volckaert G."/>
            <person name="Pohl T."/>
            <person name="Duesterhoeft A."/>
            <person name="Stiekema W."/>
            <person name="Entian K.-D."/>
            <person name="Terryn N."/>
            <person name="Harris B."/>
            <person name="Ansorge W."/>
            <person name="Brandt P."/>
            <person name="Grivell L.A."/>
            <person name="Rieger M."/>
            <person name="Weichselgartner M."/>
            <person name="de Simone V."/>
            <person name="Obermaier B."/>
            <person name="Mache R."/>
            <person name="Mueller M."/>
            <person name="Kreis M."/>
            <person name="Delseny M."/>
            <person name="Puigdomenech P."/>
            <person name="Watson M."/>
            <person name="Schmidtheini T."/>
            <person name="Reichert B."/>
            <person name="Portetelle D."/>
            <person name="Perez-Alonso M."/>
            <person name="Boutry M."/>
            <person name="Bancroft I."/>
            <person name="Vos P."/>
            <person name="Hoheisel J."/>
            <person name="Zimmermann W."/>
            <person name="Wedler H."/>
            <person name="Ridley P."/>
            <person name="Langham S.-A."/>
            <person name="McCullagh B."/>
            <person name="Bilham L."/>
            <person name="Robben J."/>
            <person name="van der Schueren J."/>
            <person name="Grymonprez B."/>
            <person name="Chuang Y.-J."/>
            <person name="Vandenbussche F."/>
            <person name="Braeken M."/>
            <person name="Weltjens I."/>
            <person name="Voet M."/>
            <person name="Bastiaens I."/>
            <person name="Aert R."/>
            <person name="Defoor E."/>
            <person name="Weitzenegger T."/>
            <person name="Bothe G."/>
            <person name="Ramsperger U."/>
            <person name="Hilbert H."/>
            <person name="Braun M."/>
            <person name="Holzer E."/>
            <person name="Brandt A."/>
            <person name="Peters S."/>
            <person name="van Staveren M."/>
            <person name="Dirkse W."/>
            <person name="Mooijman P."/>
            <person name="Klein Lankhorst R."/>
            <person name="Rose M."/>
            <person name="Hauf J."/>
            <person name="Koetter P."/>
            <person name="Berneiser S."/>
            <person name="Hempel S."/>
            <person name="Feldpausch M."/>
            <person name="Lamberth S."/>
            <person name="Van den Daele H."/>
            <person name="De Keyser A."/>
            <person name="Buysshaert C."/>
            <person name="Gielen J."/>
            <person name="Villarroel R."/>
            <person name="De Clercq R."/>
            <person name="van Montagu M."/>
            <person name="Rogers J."/>
            <person name="Cronin A."/>
            <person name="Quail M.A."/>
            <person name="Bray-Allen S."/>
            <person name="Clark L."/>
            <person name="Doggett J."/>
            <person name="Hall S."/>
            <person name="Kay M."/>
            <person name="Lennard N."/>
            <person name="McLay K."/>
            <person name="Mayes R."/>
            <person name="Pettett A."/>
            <person name="Rajandream M.A."/>
            <person name="Lyne M."/>
            <person name="Benes V."/>
            <person name="Rechmann S."/>
            <person name="Borkova D."/>
            <person name="Bloecker H."/>
            <person name="Scharfe M."/>
            <person name="Grimm M."/>
            <person name="Loehnert T.-H."/>
            <person name="Dose S."/>
            <person name="de Haan M."/>
            <person name="Maarse A.C."/>
            <person name="Schaefer M."/>
            <person name="Mueller-Auer S."/>
            <person name="Gabel C."/>
            <person name="Fuchs M."/>
            <person name="Fartmann B."/>
            <person name="Granderath K."/>
            <person name="Dauner D."/>
            <person name="Herzl A."/>
            <person name="Neumann S."/>
            <person name="Argiriou A."/>
            <person name="Vitale D."/>
            <person name="Liguori R."/>
            <person name="Piravandi E."/>
            <person name="Massenet O."/>
            <person name="Quigley F."/>
            <person name="Clabauld G."/>
            <person name="Muendlein A."/>
            <person name="Felber R."/>
            <person name="Schnabl S."/>
            <person name="Hiller R."/>
            <person name="Schmidt W."/>
            <person name="Lecharny A."/>
            <person name="Aubourg S."/>
            <person name="Chefdor F."/>
            <person name="Cooke R."/>
            <person name="Berger C."/>
            <person name="Monfort A."/>
            <person name="Casacuberta E."/>
            <person name="Gibbons T."/>
            <person name="Weber N."/>
            <person name="Vandenbol M."/>
            <person name="Bargues M."/>
            <person name="Terol J."/>
            <person name="Torres A."/>
            <person name="Perez-Perez A."/>
            <person name="Purnelle B."/>
            <person name="Bent E."/>
            <person name="Johnson S."/>
            <person name="Tacon D."/>
            <person name="Jesse T."/>
            <person name="Heijnen L."/>
            <person name="Schwarz S."/>
            <person name="Scholler P."/>
            <person name="Heber S."/>
            <person name="Francs P."/>
            <person name="Bielke C."/>
            <person name="Frishman D."/>
            <person name="Haase D."/>
            <person name="Lemcke K."/>
            <person name="Mewes H.-W."/>
            <person name="Stocker S."/>
            <person name="Zaccaria P."/>
            <person name="Bevan M."/>
            <person name="Wilson R.K."/>
            <person name="de la Bastide M."/>
            <person name="Habermann K."/>
            <person name="Parnell L."/>
            <person name="Dedhia N."/>
            <person name="Gnoj L."/>
            <person name="Schutz K."/>
            <person name="Huang E."/>
            <person name="Spiegel L."/>
            <person name="Sekhon M."/>
            <person name="Murray J."/>
            <person name="Sheet P."/>
            <person name="Cordes M."/>
            <person name="Abu-Threideh J."/>
            <person name="Stoneking T."/>
            <person name="Kalicki J."/>
            <person name="Graves T."/>
            <person name="Harmon G."/>
            <person name="Edwards J."/>
            <person name="Latreille P."/>
            <person name="Courtney L."/>
            <person name="Cloud J."/>
            <person name="Abbott A."/>
            <person name="Scott K."/>
            <person name="Johnson D."/>
            <person name="Minx P."/>
            <person name="Bentley D."/>
            <person name="Fulton B."/>
            <person name="Miller N."/>
            <person name="Greco T."/>
            <person name="Kemp K."/>
            <person name="Kramer J."/>
            <person name="Fulton L."/>
            <person name="Mardis E."/>
            <person name="Dante M."/>
            <person name="Pepin K."/>
            <person name="Hillier L.W."/>
            <person name="Nelson J."/>
            <person name="Spieth J."/>
            <person name="Ryan E."/>
            <person name="Andrews S."/>
            <person name="Geisel C."/>
            <person name="Layman D."/>
            <person name="Du H."/>
            <person name="Ali J."/>
            <person name="Berghoff A."/>
            <person name="Jones K."/>
            <person name="Drone K."/>
            <person name="Cotton M."/>
            <person name="Joshu C."/>
            <person name="Antonoiu B."/>
            <person name="Zidanic M."/>
            <person name="Strong C."/>
            <person name="Sun H."/>
            <person name="Lamar B."/>
            <person name="Yordan C."/>
            <person name="Ma P."/>
            <person name="Zhong J."/>
            <person name="Preston R."/>
            <person name="Vil D."/>
            <person name="Shekher M."/>
            <person name="Matero A."/>
            <person name="Shah R."/>
            <person name="Swaby I.K."/>
            <person name="O'Shaughnessy A."/>
            <person name="Rodriguez M."/>
            <person name="Hoffman J."/>
            <person name="Till S."/>
            <person name="Granat S."/>
            <person name="Shohdy N."/>
            <person name="Hasegawa A."/>
            <person name="Hameed A."/>
            <person name="Lodhi M."/>
            <person name="Johnson A."/>
            <person name="Chen E."/>
            <person name="Marra M.A."/>
            <person name="Martienssen R."/>
            <person name="McCombie W.R."/>
        </authorList>
    </citation>
    <scope>NUCLEOTIDE SEQUENCE [LARGE SCALE GENOMIC DNA]</scope>
    <source>
        <strain>cv. Columbia</strain>
    </source>
</reference>
<reference key="3">
    <citation type="journal article" date="2017" name="Plant J.">
        <title>Araport11: a complete reannotation of the Arabidopsis thaliana reference genome.</title>
        <authorList>
            <person name="Cheng C.Y."/>
            <person name="Krishnakumar V."/>
            <person name="Chan A.P."/>
            <person name="Thibaud-Nissen F."/>
            <person name="Schobel S."/>
            <person name="Town C.D."/>
        </authorList>
    </citation>
    <scope>GENOME REANNOTATION</scope>
    <source>
        <strain>cv. Columbia</strain>
    </source>
</reference>
<reference key="4">
    <citation type="journal article" date="2005" name="Plant Physiol.">
        <title>Genome organization of more than 300 defensin-like genes in Arabidopsis.</title>
        <authorList>
            <person name="Silverstein K.A.T."/>
            <person name="Graham M.A."/>
            <person name="Paape T.D."/>
            <person name="VandenBosch K.A."/>
        </authorList>
    </citation>
    <scope>GENE FAMILY</scope>
</reference>
<keyword id="KW-0929">Antimicrobial</keyword>
<keyword id="KW-1015">Disulfide bond</keyword>
<keyword id="KW-0295">Fungicide</keyword>
<keyword id="KW-0611">Plant defense</keyword>
<keyword id="KW-1185">Reference proteome</keyword>
<keyword id="KW-0964">Secreted</keyword>
<keyword id="KW-0732">Signal</keyword>
<evidence type="ECO:0000250" key="1"/>
<evidence type="ECO:0000255" key="2"/>
<evidence type="ECO:0000305" key="3"/>
<accession>Q2V3J0</accession>
<organism>
    <name type="scientific">Arabidopsis thaliana</name>
    <name type="common">Mouse-ear cress</name>
    <dbReference type="NCBI Taxonomy" id="3702"/>
    <lineage>
        <taxon>Eukaryota</taxon>
        <taxon>Viridiplantae</taxon>
        <taxon>Streptophyta</taxon>
        <taxon>Embryophyta</taxon>
        <taxon>Tracheophyta</taxon>
        <taxon>Spermatophyta</taxon>
        <taxon>Magnoliopsida</taxon>
        <taxon>eudicotyledons</taxon>
        <taxon>Gunneridae</taxon>
        <taxon>Pentapetalae</taxon>
        <taxon>rosids</taxon>
        <taxon>malvids</taxon>
        <taxon>Brassicales</taxon>
        <taxon>Brassicaceae</taxon>
        <taxon>Camelineae</taxon>
        <taxon>Arabidopsis</taxon>
    </lineage>
</organism>
<comment type="subcellular location">
    <subcellularLocation>
        <location evidence="1">Secreted</location>
    </subcellularLocation>
</comment>
<comment type="similarity">
    <text evidence="3">Belongs to the DEFL family.</text>
</comment>
<gene>
    <name type="ordered locus">At4g13968</name>
    <name type="ORF">FCAALL</name>
</gene>
<dbReference type="EMBL" id="Z97335">
    <property type="status" value="NOT_ANNOTATED_CDS"/>
    <property type="molecule type" value="Genomic_DNA"/>
</dbReference>
<dbReference type="EMBL" id="AL161537">
    <property type="status" value="NOT_ANNOTATED_CDS"/>
    <property type="molecule type" value="Genomic_DNA"/>
</dbReference>
<dbReference type="EMBL" id="CP002687">
    <property type="protein sequence ID" value="AEE83353.1"/>
    <property type="molecule type" value="Genomic_DNA"/>
</dbReference>
<dbReference type="RefSeq" id="NP_001031630.1">
    <property type="nucleotide sequence ID" value="NM_001036553.1"/>
</dbReference>
<dbReference type="SMR" id="Q2V3J0"/>
<dbReference type="PaxDb" id="3702-AT4G13968.1"/>
<dbReference type="EnsemblPlants" id="AT4G13968.1">
    <property type="protein sequence ID" value="AT4G13968.1"/>
    <property type="gene ID" value="AT4G13968"/>
</dbReference>
<dbReference type="GeneID" id="3770300"/>
<dbReference type="Gramene" id="AT4G13968.1">
    <property type="protein sequence ID" value="AT4G13968.1"/>
    <property type="gene ID" value="AT4G13968"/>
</dbReference>
<dbReference type="KEGG" id="ath:AT4G13968"/>
<dbReference type="Araport" id="AT4G13968"/>
<dbReference type="TAIR" id="AT4G13968"/>
<dbReference type="HOGENOM" id="CLU_180308_1_0_1"/>
<dbReference type="InParanoid" id="Q2V3J0"/>
<dbReference type="OMA" id="NCCCCYV"/>
<dbReference type="PhylomeDB" id="Q2V3J0"/>
<dbReference type="PRO" id="PR:Q2V3J0"/>
<dbReference type="Proteomes" id="UP000006548">
    <property type="component" value="Chromosome 4"/>
</dbReference>
<dbReference type="ExpressionAtlas" id="Q2V3J0">
    <property type="expression patterns" value="baseline"/>
</dbReference>
<dbReference type="GO" id="GO:0005576">
    <property type="term" value="C:extracellular region"/>
    <property type="evidence" value="ECO:0007669"/>
    <property type="project" value="UniProtKB-SubCell"/>
</dbReference>
<dbReference type="GO" id="GO:0050832">
    <property type="term" value="P:defense response to fungus"/>
    <property type="evidence" value="ECO:0007669"/>
    <property type="project" value="UniProtKB-KW"/>
</dbReference>
<dbReference type="GO" id="GO:0031640">
    <property type="term" value="P:killing of cells of another organism"/>
    <property type="evidence" value="ECO:0007669"/>
    <property type="project" value="UniProtKB-KW"/>
</dbReference>
<proteinExistence type="inferred from homology"/>